<proteinExistence type="evidence at transcript level"/>
<gene>
    <name evidence="4" type="primary">DHNAT2</name>
    <name evidence="7" type="ordered locus">At5g48950</name>
    <name evidence="8" type="ORF">K19E20.6</name>
</gene>
<name>DNAT2_ARATH</name>
<accession>Q9FI76</accession>
<keyword id="KW-0378">Hydrolase</keyword>
<keyword id="KW-0576">Peroxisome</keyword>
<keyword id="KW-1185">Reference proteome</keyword>
<evidence type="ECO:0000250" key="1">
    <source>
        <dbReference type="UniProtKB" id="Q9SX65"/>
    </source>
</evidence>
<evidence type="ECO:0000255" key="2"/>
<evidence type="ECO:0000269" key="3">
    <source>
    </source>
</evidence>
<evidence type="ECO:0000303" key="4">
    <source>
    </source>
</evidence>
<evidence type="ECO:0000305" key="5"/>
<evidence type="ECO:0000305" key="6">
    <source>
    </source>
</evidence>
<evidence type="ECO:0000312" key="7">
    <source>
        <dbReference type="Araport" id="AT5G48950"/>
    </source>
</evidence>
<evidence type="ECO:0000312" key="8">
    <source>
        <dbReference type="EMBL" id="BAB10318.1"/>
    </source>
</evidence>
<evidence type="ECO:0000312" key="9">
    <source>
        <dbReference type="Proteomes" id="UP000006548"/>
    </source>
</evidence>
<comment type="function">
    <text evidence="3">Catalyzes the hydrolysis of the thioester bond of 1,4-dihydroxy-2-naphthoyl-CoA (DHNA-CoA) in peroxisomes, a necessary step to form the naphthoquinone ring of phylloquinone (vitamin K(1)). Displayed also slight thioesterase activity towards benzoyl-CoA. Is not active on phenylacetyl-CoA, succinyl-CoA and palmitoyl-CoA thioesters.</text>
</comment>
<comment type="pathway">
    <text evidence="6">Cofactor biosynthesis; phylloquinone biosynthesis.</text>
</comment>
<comment type="pathway">
    <text evidence="6">Quinol/quinone metabolism; 1,4-dihydroxy-2-naphthoate biosynthesis; 1,4-dihydroxy-2-naphthoate from chorismate: step 7/7.</text>
</comment>
<comment type="subunit">
    <text evidence="1">Homotetramers.</text>
</comment>
<comment type="subcellular location">
    <subcellularLocation>
        <location evidence="3">Peroxisome</location>
    </subcellularLocation>
</comment>
<comment type="disruption phenotype">
    <text evidence="3">Reduced DHNA-CoA thioesterase activity and phylloquinone content.</text>
</comment>
<comment type="miscellaneous">
    <text evidence="4">May originate from a horizontal gene transfer with a bacterial species of the Lactobacillales order.</text>
</comment>
<comment type="similarity">
    <text evidence="5">Belongs to the 4-hydroxybenzoyl-CoA thioesterase family. DHNA-CoA hydrolase subfamily.</text>
</comment>
<feature type="chain" id="PRO_0000432100" description="1,4-dihydroxy-2-naphthoyl-CoA thioesterase 2">
    <location>
        <begin position="1"/>
        <end position="157"/>
    </location>
</feature>
<feature type="short sequence motif" description="Microbody targeting signal" evidence="2">
    <location>
        <begin position="154"/>
        <end position="156"/>
    </location>
</feature>
<feature type="active site" evidence="1">
    <location>
        <position position="56"/>
    </location>
</feature>
<sequence>MDPKSPEFIIDQPLKILGFVFDELSATRVSGHLTLTEKCCQPFKVLHGGVSALIAEALASLGAGIASGFKRVAGIHLSIHHLRPAALGEIVFAESFPVSVGKNIQVWEVRLWKAKKTETPDNKIMVSTSRVTLFCGLPIPDHVKDAPDELKKVISKL</sequence>
<protein>
    <recommendedName>
        <fullName evidence="4">1,4-dihydroxy-2-naphthoyl-CoA thioesterase 2</fullName>
        <shortName evidence="4">AtDHNAT2</shortName>
        <shortName evidence="4">DHNA-CoA thioesterase 2</shortName>
        <ecNumber evidence="5">3.1.2.-</ecNumber>
    </recommendedName>
</protein>
<reference key="1">
    <citation type="journal article" date="1999" name="DNA Res.">
        <title>Structural analysis of Arabidopsis thaliana chromosome 5. IX. Sequence features of the regions of 1,011,550 bp covered by seventeen P1 and TAC clones.</title>
        <authorList>
            <person name="Kaneko T."/>
            <person name="Katoh T."/>
            <person name="Sato S."/>
            <person name="Nakamura Y."/>
            <person name="Asamizu E."/>
            <person name="Kotani H."/>
            <person name="Miyajima N."/>
            <person name="Tabata S."/>
        </authorList>
    </citation>
    <scope>NUCLEOTIDE SEQUENCE [LARGE SCALE GENOMIC DNA]</scope>
    <source>
        <strain>cv. Columbia</strain>
    </source>
</reference>
<reference key="2">
    <citation type="journal article" date="2017" name="Plant J.">
        <title>Araport11: a complete reannotation of the Arabidopsis thaliana reference genome.</title>
        <authorList>
            <person name="Cheng C.Y."/>
            <person name="Krishnakumar V."/>
            <person name="Chan A.P."/>
            <person name="Thibaud-Nissen F."/>
            <person name="Schobel S."/>
            <person name="Town C.D."/>
        </authorList>
    </citation>
    <scope>GENOME REANNOTATION</scope>
    <source>
        <strain>cv. Columbia</strain>
    </source>
</reference>
<reference key="3">
    <citation type="submission" date="2007-06" db="EMBL/GenBank/DDBJ databases">
        <title>Arabidopsis ORF clones.</title>
        <authorList>
            <person name="Bautista-Mercan V.R."/>
            <person name="Kim C.J."/>
            <person name="Chen H."/>
            <person name="Quan R."/>
            <person name="De Los Reyes C."/>
            <person name="Ecker J.R."/>
        </authorList>
    </citation>
    <scope>NUCLEOTIDE SEQUENCE [LARGE SCALE MRNA]</scope>
    <source>
        <strain>cv. Columbia</strain>
    </source>
</reference>
<reference key="4">
    <citation type="journal article" date="2004" name="Plant Physiol.">
        <title>AraPerox. A database of putative Arabidopsis proteins from plant peroxisomes.</title>
        <authorList>
            <person name="Reumann S."/>
            <person name="Ma C."/>
            <person name="Lemke S."/>
            <person name="Babujee L."/>
        </authorList>
    </citation>
    <scope>WEB RESOURCE</scope>
</reference>
<reference key="5">
    <citation type="journal article" date="2012" name="Plant J.">
        <title>Phylloquinone (vitamin K(1)) biosynthesis in plants: two peroxisomal thioesterases of Lactobacillales origin hydrolyze 1,4-dihydroxy-2-naphthoyl-CoA.</title>
        <authorList>
            <person name="Widhalm J.R."/>
            <person name="Ducluzeau A.-L."/>
            <person name="Buller N.E."/>
            <person name="Elowsky C.G."/>
            <person name="Olsen L.J."/>
            <person name="Basset G.J.C."/>
        </authorList>
    </citation>
    <scope>FUNCTION</scope>
    <scope>PATHWAY</scope>
    <scope>SUBCELLULAR LOCATION</scope>
    <scope>DISRUPTION PHENOTYPE</scope>
    <scope>MISCELLANEOUS</scope>
</reference>
<organism evidence="9">
    <name type="scientific">Arabidopsis thaliana</name>
    <name type="common">Mouse-ear cress</name>
    <dbReference type="NCBI Taxonomy" id="3702"/>
    <lineage>
        <taxon>Eukaryota</taxon>
        <taxon>Viridiplantae</taxon>
        <taxon>Streptophyta</taxon>
        <taxon>Embryophyta</taxon>
        <taxon>Tracheophyta</taxon>
        <taxon>Spermatophyta</taxon>
        <taxon>Magnoliopsida</taxon>
        <taxon>eudicotyledons</taxon>
        <taxon>Gunneridae</taxon>
        <taxon>Pentapetalae</taxon>
        <taxon>rosids</taxon>
        <taxon>malvids</taxon>
        <taxon>Brassicales</taxon>
        <taxon>Brassicaceae</taxon>
        <taxon>Camelineae</taxon>
        <taxon>Arabidopsis</taxon>
    </lineage>
</organism>
<dbReference type="EC" id="3.1.2.-" evidence="5"/>
<dbReference type="EMBL" id="AB017061">
    <property type="protein sequence ID" value="BAB10318.1"/>
    <property type="molecule type" value="Genomic_DNA"/>
</dbReference>
<dbReference type="EMBL" id="CP002688">
    <property type="protein sequence ID" value="AED95748.1"/>
    <property type="molecule type" value="Genomic_DNA"/>
</dbReference>
<dbReference type="EMBL" id="BT030605">
    <property type="protein sequence ID" value="ABR46185.1"/>
    <property type="molecule type" value="mRNA"/>
</dbReference>
<dbReference type="RefSeq" id="NP_199706.1">
    <property type="nucleotide sequence ID" value="NM_124272.3"/>
</dbReference>
<dbReference type="SMR" id="Q9FI76"/>
<dbReference type="FunCoup" id="Q9FI76">
    <property type="interactions" value="235"/>
</dbReference>
<dbReference type="STRING" id="3702.Q9FI76"/>
<dbReference type="PaxDb" id="3702-AT5G48950.1"/>
<dbReference type="ProteomicsDB" id="220713"/>
<dbReference type="EnsemblPlants" id="AT5G48950.1">
    <property type="protein sequence ID" value="AT5G48950.1"/>
    <property type="gene ID" value="AT5G48950"/>
</dbReference>
<dbReference type="GeneID" id="834953"/>
<dbReference type="Gramene" id="AT5G48950.1">
    <property type="protein sequence ID" value="AT5G48950.1"/>
    <property type="gene ID" value="AT5G48950"/>
</dbReference>
<dbReference type="KEGG" id="ath:AT5G48950"/>
<dbReference type="Araport" id="AT5G48950"/>
<dbReference type="TAIR" id="AT5G48950">
    <property type="gene designation" value="DHNAT2"/>
</dbReference>
<dbReference type="eggNOG" id="KOG3328">
    <property type="taxonomic scope" value="Eukaryota"/>
</dbReference>
<dbReference type="HOGENOM" id="CLU_089876_2_0_1"/>
<dbReference type="InParanoid" id="Q9FI76"/>
<dbReference type="OMA" id="PDNKIMV"/>
<dbReference type="PhylomeDB" id="Q9FI76"/>
<dbReference type="BioCyc" id="ARA:AT5G48950-MONOMER"/>
<dbReference type="BioCyc" id="MetaCyc:AT5G48950-MONOMER"/>
<dbReference type="BRENDA" id="3.1.2.28">
    <property type="organism ID" value="399"/>
</dbReference>
<dbReference type="UniPathway" id="UPA00995"/>
<dbReference type="UniPathway" id="UPA01057">
    <property type="reaction ID" value="UER01033"/>
</dbReference>
<dbReference type="PRO" id="PR:Q9FI76"/>
<dbReference type="Proteomes" id="UP000006548">
    <property type="component" value="Chromosome 5"/>
</dbReference>
<dbReference type="ExpressionAtlas" id="Q9FI76">
    <property type="expression patterns" value="baseline and differential"/>
</dbReference>
<dbReference type="GO" id="GO:0005777">
    <property type="term" value="C:peroxisome"/>
    <property type="evidence" value="ECO:0000314"/>
    <property type="project" value="TAIR"/>
</dbReference>
<dbReference type="GO" id="GO:0016787">
    <property type="term" value="F:hydrolase activity"/>
    <property type="evidence" value="ECO:0007669"/>
    <property type="project" value="UniProtKB-KW"/>
</dbReference>
<dbReference type="GO" id="GO:0042372">
    <property type="term" value="P:phylloquinone biosynthetic process"/>
    <property type="evidence" value="ECO:0000315"/>
    <property type="project" value="TAIR"/>
</dbReference>
<dbReference type="GO" id="GO:0051289">
    <property type="term" value="P:protein homotetramerization"/>
    <property type="evidence" value="ECO:0000250"/>
    <property type="project" value="UniProtKB"/>
</dbReference>
<dbReference type="CDD" id="cd03443">
    <property type="entry name" value="PaaI_thioesterase"/>
    <property type="match status" value="1"/>
</dbReference>
<dbReference type="FunFam" id="3.10.129.10:FF:000048">
    <property type="entry name" value="14-dihydroxy-2-naphthoyl-CoA thioesterase 1"/>
    <property type="match status" value="1"/>
</dbReference>
<dbReference type="Gene3D" id="3.10.129.10">
    <property type="entry name" value="Hotdog Thioesterase"/>
    <property type="match status" value="1"/>
</dbReference>
<dbReference type="InterPro" id="IPR029069">
    <property type="entry name" value="HotDog_dom_sf"/>
</dbReference>
<dbReference type="InterPro" id="IPR003736">
    <property type="entry name" value="PAAI_dom"/>
</dbReference>
<dbReference type="InterPro" id="IPR006683">
    <property type="entry name" value="Thioestr_dom"/>
</dbReference>
<dbReference type="NCBIfam" id="TIGR00369">
    <property type="entry name" value="unchar_dom_1"/>
    <property type="match status" value="1"/>
</dbReference>
<dbReference type="PANTHER" id="PTHR43240">
    <property type="entry name" value="1,4-DIHYDROXY-2-NAPHTHOYL-COA THIOESTERASE 1"/>
    <property type="match status" value="1"/>
</dbReference>
<dbReference type="PANTHER" id="PTHR43240:SF14">
    <property type="entry name" value="1,4-DIHYDROXY-2-NAPHTHOYL-COA THIOESTERASE 2"/>
    <property type="match status" value="1"/>
</dbReference>
<dbReference type="Pfam" id="PF03061">
    <property type="entry name" value="4HBT"/>
    <property type="match status" value="1"/>
</dbReference>
<dbReference type="SUPFAM" id="SSF54637">
    <property type="entry name" value="Thioesterase/thiol ester dehydrase-isomerase"/>
    <property type="match status" value="1"/>
</dbReference>